<protein>
    <recommendedName>
        <fullName evidence="1">GTPase Obg</fullName>
        <ecNumber evidence="1">3.6.5.-</ecNumber>
    </recommendedName>
    <alternativeName>
        <fullName evidence="1">GTP-binding protein Obg</fullName>
    </alternativeName>
</protein>
<reference key="1">
    <citation type="journal article" date="2002" name="Proc. Natl. Acad. Sci. U.S.A.">
        <title>The complete genome sequence of Chlorobium tepidum TLS, a photosynthetic, anaerobic, green-sulfur bacterium.</title>
        <authorList>
            <person name="Eisen J.A."/>
            <person name="Nelson K.E."/>
            <person name="Paulsen I.T."/>
            <person name="Heidelberg J.F."/>
            <person name="Wu M."/>
            <person name="Dodson R.J."/>
            <person name="DeBoy R.T."/>
            <person name="Gwinn M.L."/>
            <person name="Nelson W.C."/>
            <person name="Haft D.H."/>
            <person name="Hickey E.K."/>
            <person name="Peterson J.D."/>
            <person name="Durkin A.S."/>
            <person name="Kolonay J.F."/>
            <person name="Yang F."/>
            <person name="Holt I.E."/>
            <person name="Umayam L.A."/>
            <person name="Mason T.M."/>
            <person name="Brenner M."/>
            <person name="Shea T.P."/>
            <person name="Parksey D.S."/>
            <person name="Nierman W.C."/>
            <person name="Feldblyum T.V."/>
            <person name="Hansen C.L."/>
            <person name="Craven M.B."/>
            <person name="Radune D."/>
            <person name="Vamathevan J.J."/>
            <person name="Khouri H.M."/>
            <person name="White O."/>
            <person name="Gruber T.M."/>
            <person name="Ketchum K.A."/>
            <person name="Venter J.C."/>
            <person name="Tettelin H."/>
            <person name="Bryant D.A."/>
            <person name="Fraser C.M."/>
        </authorList>
    </citation>
    <scope>NUCLEOTIDE SEQUENCE [LARGE SCALE GENOMIC DNA]</scope>
    <source>
        <strain>ATCC 49652 / DSM 12025 / NBRC 103806 / TLS</strain>
    </source>
</reference>
<organism>
    <name type="scientific">Chlorobaculum tepidum (strain ATCC 49652 / DSM 12025 / NBRC 103806 / TLS)</name>
    <name type="common">Chlorobium tepidum</name>
    <dbReference type="NCBI Taxonomy" id="194439"/>
    <lineage>
        <taxon>Bacteria</taxon>
        <taxon>Pseudomonadati</taxon>
        <taxon>Chlorobiota</taxon>
        <taxon>Chlorobiia</taxon>
        <taxon>Chlorobiales</taxon>
        <taxon>Chlorobiaceae</taxon>
        <taxon>Chlorobaculum</taxon>
    </lineage>
</organism>
<gene>
    <name evidence="1" type="primary">obg</name>
    <name type="ordered locus">CT2213</name>
</gene>
<comment type="function">
    <text evidence="1">An essential GTPase which binds GTP, GDP and possibly (p)ppGpp with moderate affinity, with high nucleotide exchange rates and a fairly low GTP hydrolysis rate. Plays a role in control of the cell cycle, stress response, ribosome biogenesis and in those bacteria that undergo differentiation, in morphogenesis control.</text>
</comment>
<comment type="cofactor">
    <cofactor evidence="1">
        <name>Mg(2+)</name>
        <dbReference type="ChEBI" id="CHEBI:18420"/>
    </cofactor>
</comment>
<comment type="subunit">
    <text evidence="1">Monomer.</text>
</comment>
<comment type="subcellular location">
    <subcellularLocation>
        <location evidence="1">Cytoplasm</location>
    </subcellularLocation>
</comment>
<comment type="similarity">
    <text evidence="1">Belongs to the TRAFAC class OBG-HflX-like GTPase superfamily. OBG GTPase family.</text>
</comment>
<feature type="chain" id="PRO_0000385827" description="GTPase Obg">
    <location>
        <begin position="1"/>
        <end position="335"/>
    </location>
</feature>
<feature type="domain" description="Obg" evidence="2">
    <location>
        <begin position="1"/>
        <end position="159"/>
    </location>
</feature>
<feature type="domain" description="OBG-type G" evidence="1">
    <location>
        <begin position="160"/>
        <end position="323"/>
    </location>
</feature>
<feature type="binding site" evidence="1">
    <location>
        <begin position="166"/>
        <end position="173"/>
    </location>
    <ligand>
        <name>GTP</name>
        <dbReference type="ChEBI" id="CHEBI:37565"/>
    </ligand>
</feature>
<feature type="binding site" evidence="1">
    <location>
        <position position="173"/>
    </location>
    <ligand>
        <name>Mg(2+)</name>
        <dbReference type="ChEBI" id="CHEBI:18420"/>
    </ligand>
</feature>
<feature type="binding site" evidence="1">
    <location>
        <begin position="191"/>
        <end position="195"/>
    </location>
    <ligand>
        <name>GTP</name>
        <dbReference type="ChEBI" id="CHEBI:37565"/>
    </ligand>
</feature>
<feature type="binding site" evidence="1">
    <location>
        <position position="193"/>
    </location>
    <ligand>
        <name>Mg(2+)</name>
        <dbReference type="ChEBI" id="CHEBI:18420"/>
    </ligand>
</feature>
<feature type="binding site" evidence="1">
    <location>
        <begin position="213"/>
        <end position="216"/>
    </location>
    <ligand>
        <name>GTP</name>
        <dbReference type="ChEBI" id="CHEBI:37565"/>
    </ligand>
</feature>
<feature type="binding site" evidence="1">
    <location>
        <begin position="280"/>
        <end position="283"/>
    </location>
    <ligand>
        <name>GTP</name>
        <dbReference type="ChEBI" id="CHEBI:37565"/>
    </ligand>
</feature>
<feature type="binding site" evidence="1">
    <location>
        <begin position="304"/>
        <end position="306"/>
    </location>
    <ligand>
        <name>GTP</name>
        <dbReference type="ChEBI" id="CHEBI:37565"/>
    </ligand>
</feature>
<evidence type="ECO:0000255" key="1">
    <source>
        <dbReference type="HAMAP-Rule" id="MF_01454"/>
    </source>
</evidence>
<evidence type="ECO:0000255" key="2">
    <source>
        <dbReference type="PROSITE-ProRule" id="PRU01231"/>
    </source>
</evidence>
<accession>Q8KAF0</accession>
<name>OBG_CHLTE</name>
<proteinExistence type="inferred from homology"/>
<sequence length="335" mass="36120">MKFVDSAKISVKAGDGGRGCVSFRREKFVPKGGPDGGDGGRGGHVYLRANKQLTTLLDFKYRKSYIAGRGGHGLGARKSGKDGKDVIIGVPCGTVVRNVETGEVICDMVEDGQEIMIAKGGRGGWGNQHFATATRQAPRFAQPGEPGEEYELEMELKLMADVGLVGFPNAGKSTLISVLSAARPKIADYPFTTLVPNLGIVRYEDYKSFVMADIPGIIEGAAEGRGLGIQFLRHIERTKTLLIMVPSNTEDIAAEYATLLKELEKFDPSLLSKPRLVVITKMDIAPEDFTMPELEKGVKVLAISSVAGQGLKALKDELWRQVSLQNQSPSEHAGS</sequence>
<dbReference type="EC" id="3.6.5.-" evidence="1"/>
<dbReference type="EMBL" id="AE006470">
    <property type="protein sequence ID" value="AAM73429.1"/>
    <property type="molecule type" value="Genomic_DNA"/>
</dbReference>
<dbReference type="RefSeq" id="NP_663087.1">
    <property type="nucleotide sequence ID" value="NC_002932.3"/>
</dbReference>
<dbReference type="RefSeq" id="WP_010933866.1">
    <property type="nucleotide sequence ID" value="NC_002932.3"/>
</dbReference>
<dbReference type="SMR" id="Q8KAF0"/>
<dbReference type="STRING" id="194439.CT2213"/>
<dbReference type="EnsemblBacteria" id="AAM73429">
    <property type="protein sequence ID" value="AAM73429"/>
    <property type="gene ID" value="CT2213"/>
</dbReference>
<dbReference type="KEGG" id="cte:CT2213"/>
<dbReference type="PATRIC" id="fig|194439.7.peg.2009"/>
<dbReference type="eggNOG" id="COG0536">
    <property type="taxonomic scope" value="Bacteria"/>
</dbReference>
<dbReference type="HOGENOM" id="CLU_011747_2_0_10"/>
<dbReference type="OrthoDB" id="9807318at2"/>
<dbReference type="Proteomes" id="UP000001007">
    <property type="component" value="Chromosome"/>
</dbReference>
<dbReference type="GO" id="GO:0005737">
    <property type="term" value="C:cytoplasm"/>
    <property type="evidence" value="ECO:0007669"/>
    <property type="project" value="UniProtKB-SubCell"/>
</dbReference>
<dbReference type="GO" id="GO:0005525">
    <property type="term" value="F:GTP binding"/>
    <property type="evidence" value="ECO:0007669"/>
    <property type="project" value="UniProtKB-UniRule"/>
</dbReference>
<dbReference type="GO" id="GO:0003924">
    <property type="term" value="F:GTPase activity"/>
    <property type="evidence" value="ECO:0007669"/>
    <property type="project" value="UniProtKB-UniRule"/>
</dbReference>
<dbReference type="GO" id="GO:0000287">
    <property type="term" value="F:magnesium ion binding"/>
    <property type="evidence" value="ECO:0007669"/>
    <property type="project" value="InterPro"/>
</dbReference>
<dbReference type="GO" id="GO:0042254">
    <property type="term" value="P:ribosome biogenesis"/>
    <property type="evidence" value="ECO:0007669"/>
    <property type="project" value="UniProtKB-UniRule"/>
</dbReference>
<dbReference type="CDD" id="cd01898">
    <property type="entry name" value="Obg"/>
    <property type="match status" value="1"/>
</dbReference>
<dbReference type="FunFam" id="2.70.210.12:FF:000001">
    <property type="entry name" value="GTPase Obg"/>
    <property type="match status" value="1"/>
</dbReference>
<dbReference type="Gene3D" id="2.70.210.12">
    <property type="entry name" value="GTP1/OBG domain"/>
    <property type="match status" value="1"/>
</dbReference>
<dbReference type="Gene3D" id="3.40.50.300">
    <property type="entry name" value="P-loop containing nucleotide triphosphate hydrolases"/>
    <property type="match status" value="1"/>
</dbReference>
<dbReference type="HAMAP" id="MF_01454">
    <property type="entry name" value="GTPase_Obg"/>
    <property type="match status" value="1"/>
</dbReference>
<dbReference type="InterPro" id="IPR031167">
    <property type="entry name" value="G_OBG"/>
</dbReference>
<dbReference type="InterPro" id="IPR006073">
    <property type="entry name" value="GTP-bd"/>
</dbReference>
<dbReference type="InterPro" id="IPR014100">
    <property type="entry name" value="GTP-bd_Obg/CgtA"/>
</dbReference>
<dbReference type="InterPro" id="IPR006074">
    <property type="entry name" value="GTP1-OBG_CS"/>
</dbReference>
<dbReference type="InterPro" id="IPR006169">
    <property type="entry name" value="GTP1_OBG_dom"/>
</dbReference>
<dbReference type="InterPro" id="IPR036726">
    <property type="entry name" value="GTP1_OBG_dom_sf"/>
</dbReference>
<dbReference type="InterPro" id="IPR045086">
    <property type="entry name" value="OBG_GTPase"/>
</dbReference>
<dbReference type="InterPro" id="IPR027417">
    <property type="entry name" value="P-loop_NTPase"/>
</dbReference>
<dbReference type="NCBIfam" id="TIGR02729">
    <property type="entry name" value="Obg_CgtA"/>
    <property type="match status" value="1"/>
</dbReference>
<dbReference type="NCBIfam" id="NF008954">
    <property type="entry name" value="PRK12296.1"/>
    <property type="match status" value="1"/>
</dbReference>
<dbReference type="NCBIfam" id="NF008955">
    <property type="entry name" value="PRK12297.1"/>
    <property type="match status" value="1"/>
</dbReference>
<dbReference type="NCBIfam" id="NF008956">
    <property type="entry name" value="PRK12299.1"/>
    <property type="match status" value="1"/>
</dbReference>
<dbReference type="PANTHER" id="PTHR11702">
    <property type="entry name" value="DEVELOPMENTALLY REGULATED GTP-BINDING PROTEIN-RELATED"/>
    <property type="match status" value="1"/>
</dbReference>
<dbReference type="PANTHER" id="PTHR11702:SF31">
    <property type="entry name" value="MITOCHONDRIAL RIBOSOME-ASSOCIATED GTPASE 2"/>
    <property type="match status" value="1"/>
</dbReference>
<dbReference type="Pfam" id="PF01018">
    <property type="entry name" value="GTP1_OBG"/>
    <property type="match status" value="1"/>
</dbReference>
<dbReference type="Pfam" id="PF01926">
    <property type="entry name" value="MMR_HSR1"/>
    <property type="match status" value="1"/>
</dbReference>
<dbReference type="PIRSF" id="PIRSF002401">
    <property type="entry name" value="GTP_bd_Obg/CgtA"/>
    <property type="match status" value="1"/>
</dbReference>
<dbReference type="PRINTS" id="PR00326">
    <property type="entry name" value="GTP1OBG"/>
</dbReference>
<dbReference type="SUPFAM" id="SSF82051">
    <property type="entry name" value="Obg GTP-binding protein N-terminal domain"/>
    <property type="match status" value="1"/>
</dbReference>
<dbReference type="SUPFAM" id="SSF52540">
    <property type="entry name" value="P-loop containing nucleoside triphosphate hydrolases"/>
    <property type="match status" value="1"/>
</dbReference>
<dbReference type="PROSITE" id="PS51710">
    <property type="entry name" value="G_OBG"/>
    <property type="match status" value="1"/>
</dbReference>
<dbReference type="PROSITE" id="PS00905">
    <property type="entry name" value="GTP1_OBG"/>
    <property type="match status" value="1"/>
</dbReference>
<dbReference type="PROSITE" id="PS51883">
    <property type="entry name" value="OBG"/>
    <property type="match status" value="1"/>
</dbReference>
<keyword id="KW-0963">Cytoplasm</keyword>
<keyword id="KW-0342">GTP-binding</keyword>
<keyword id="KW-0378">Hydrolase</keyword>
<keyword id="KW-0460">Magnesium</keyword>
<keyword id="KW-0479">Metal-binding</keyword>
<keyword id="KW-0547">Nucleotide-binding</keyword>
<keyword id="KW-1185">Reference proteome</keyword>